<gene>
    <name type="primary">garnl3</name>
    <name type="ORF">si:dkey-46k8.1</name>
</gene>
<keyword id="KW-0343">GTPase activation</keyword>
<keyword id="KW-1185">Reference proteome</keyword>
<organism>
    <name type="scientific">Danio rerio</name>
    <name type="common">Zebrafish</name>
    <name type="synonym">Brachydanio rerio</name>
    <dbReference type="NCBI Taxonomy" id="7955"/>
    <lineage>
        <taxon>Eukaryota</taxon>
        <taxon>Metazoa</taxon>
        <taxon>Chordata</taxon>
        <taxon>Craniata</taxon>
        <taxon>Vertebrata</taxon>
        <taxon>Euteleostomi</taxon>
        <taxon>Actinopterygii</taxon>
        <taxon>Neopterygii</taxon>
        <taxon>Teleostei</taxon>
        <taxon>Ostariophysi</taxon>
        <taxon>Cypriniformes</taxon>
        <taxon>Danionidae</taxon>
        <taxon>Danioninae</taxon>
        <taxon>Danio</taxon>
    </lineage>
</organism>
<sequence>MNSDINMYLGREKAGIMRKRALLLRKGCSFEITSSASEDLGCRRGEFSRKHYGSVELLISSDADGAIQRAGRFRVENGSIDEISDYTPGTWRRTDVHLENPEYHTRWYFKYFLGKVHQNYVGTDAEKNPFFLSVVLSDQNNQRVPQYRAILWRKTGTLKISLPYSPTKTLSVKSILSAMNVDRFEKGPREILNPEIQKDLLVLEEQEGSVNFKFGVLYAKDGQLTDDEMFSNEMGSETFEKFLNLLGDTICLQGWAGYRGGLDTKNDTTGINSIYTVYQGHELMFHVSTMLPYSKENKQQVERKRHIGNDIVTIVFQEGDDASPSFKPSMIRSHFTHIFALVRYNSQNDSYRLKIFSEESVPLFGPPLPSPPVFTDHQEFRDFLLVKLINGEKATLETPTFAQKRQRTLDMLIRSLYQDLMPDMHKNMLNRRSFSDVLPESPKSARKKEEARQAEFVRVGQALKLKTIVRGDAPTSLVTTGLCRKEPWESQSFCSSFPYDIVCGDSWGQSLLVATDSAGVMLLEDSPTLPPVQVFDKTLTVKQMHVLEPQDLLIARADKGKDARLYVYRLSTLKQGIEERQLVRTKCDSRENKLEKTKGCHLYSINTHHGVELRIVAAIRNKLLLITRKQSRLECVSSIATVTGSTDSPVEEFQYIREICLCDSPVVMALVDGPTGENDHMICVAYRHQFDLINESTGDAYRLHHVDSNRVNFVAAIDVYEDGEAGLLLCYNNICVYKKVCPFNGATPMIQPNTSDFHFSWNQMPNATVCAFPYILAFTTDSIEIRLVVNGNLVYTAVVPELQLTASRSDIYFISSAPINSASNCSSRDTSSQSSPQTPTGYEMPVFPSPLGDGETQSKHIYKIPLSNLVGRSIERPLKSPLVNKVLTAPAPSMTGPAPMIGSTTSLSLSRMEIKEIASRTRKELLGLTEEPSSKADGNSVKQRRMSKKNKEEEQKRTAEISIAEQVGMESVDGETDIQQLCPSGSEVEVRDDSPPTANPFTFSTSFEDDILDLK</sequence>
<protein>
    <recommendedName>
        <fullName>GTPase-activating Rap/Ran-GAP domain-like protein 3</fullName>
    </recommendedName>
</protein>
<dbReference type="EMBL" id="AL929590">
    <property type="protein sequence ID" value="CAN88087.1"/>
    <property type="molecule type" value="Genomic_DNA"/>
</dbReference>
<dbReference type="EMBL" id="BX005029">
    <property type="protein sequence ID" value="CAN88087.1"/>
    <property type="status" value="JOINED"/>
    <property type="molecule type" value="Genomic_DNA"/>
</dbReference>
<dbReference type="EMBL" id="BX005029">
    <property type="protein sequence ID" value="CAN88090.1"/>
    <property type="molecule type" value="Genomic_DNA"/>
</dbReference>
<dbReference type="EMBL" id="AL929590">
    <property type="protein sequence ID" value="CAN88090.1"/>
    <property type="status" value="JOINED"/>
    <property type="molecule type" value="Genomic_DNA"/>
</dbReference>
<dbReference type="RefSeq" id="NP_001121999.1">
    <property type="nucleotide sequence ID" value="NM_001128527.1"/>
</dbReference>
<dbReference type="SMR" id="A5PF44"/>
<dbReference type="FunCoup" id="A5PF44">
    <property type="interactions" value="670"/>
</dbReference>
<dbReference type="STRING" id="7955.ENSDARP00000080071"/>
<dbReference type="PaxDb" id="7955-ENSDARP00000080071"/>
<dbReference type="Ensembl" id="ENSDART00000085636">
    <property type="protein sequence ID" value="ENSDARP00000080071"/>
    <property type="gene ID" value="ENSDARG00000060631"/>
</dbReference>
<dbReference type="GeneID" id="560594"/>
<dbReference type="KEGG" id="dre:560594"/>
<dbReference type="AGR" id="ZFIN:ZDB-GENE-060526-61"/>
<dbReference type="CTD" id="84253"/>
<dbReference type="ZFIN" id="ZDB-GENE-060526-61">
    <property type="gene designation" value="garnl3"/>
</dbReference>
<dbReference type="eggNOG" id="KOG3686">
    <property type="taxonomic scope" value="Eukaryota"/>
</dbReference>
<dbReference type="HOGENOM" id="CLU_008685_1_0_1"/>
<dbReference type="InParanoid" id="A5PF44"/>
<dbReference type="OMA" id="FEGYSER"/>
<dbReference type="OrthoDB" id="2499658at2759"/>
<dbReference type="PhylomeDB" id="A5PF44"/>
<dbReference type="PRO" id="PR:A5PF44"/>
<dbReference type="Proteomes" id="UP000000437">
    <property type="component" value="Alternate scaffold 5"/>
</dbReference>
<dbReference type="Proteomes" id="UP000000437">
    <property type="component" value="Chromosome 5"/>
</dbReference>
<dbReference type="Bgee" id="ENSDARG00000060631">
    <property type="expression patterns" value="Expressed in brain and 14 other cell types or tissues"/>
</dbReference>
<dbReference type="GO" id="GO:0005096">
    <property type="term" value="F:GTPase activator activity"/>
    <property type="evidence" value="ECO:0007669"/>
    <property type="project" value="UniProtKB-KW"/>
</dbReference>
<dbReference type="GO" id="GO:0051056">
    <property type="term" value="P:regulation of small GTPase mediated signal transduction"/>
    <property type="evidence" value="ECO:0007669"/>
    <property type="project" value="InterPro"/>
</dbReference>
<dbReference type="FunFam" id="3.40.50.11210:FF:000006">
    <property type="entry name" value="GTPase-activating Rap/Ran-GAP domain-like protein 3 isoform X1"/>
    <property type="match status" value="1"/>
</dbReference>
<dbReference type="Gene3D" id="3.40.50.11210">
    <property type="entry name" value="Rap/Ran-GAP"/>
    <property type="match status" value="1"/>
</dbReference>
<dbReference type="InterPro" id="IPR001180">
    <property type="entry name" value="CNH_dom"/>
</dbReference>
<dbReference type="InterPro" id="IPR035974">
    <property type="entry name" value="Rap/Ran-GAP_sf"/>
</dbReference>
<dbReference type="InterPro" id="IPR000331">
    <property type="entry name" value="Rap/Ran_GAP_dom"/>
</dbReference>
<dbReference type="InterPro" id="IPR050989">
    <property type="entry name" value="Rap1_Ran_GAP"/>
</dbReference>
<dbReference type="PANTHER" id="PTHR15711:SF62">
    <property type="entry name" value="GTPASE-ACTIVATING RAP_RAN-GAP DOMAIN-LIKE PROTEIN 3"/>
    <property type="match status" value="1"/>
</dbReference>
<dbReference type="PANTHER" id="PTHR15711">
    <property type="entry name" value="RAP GTPASE-ACTIVATING PROTEIN"/>
    <property type="match status" value="1"/>
</dbReference>
<dbReference type="Pfam" id="PF00780">
    <property type="entry name" value="CNH"/>
    <property type="match status" value="1"/>
</dbReference>
<dbReference type="Pfam" id="PF21022">
    <property type="entry name" value="Rap-GAP_dimer"/>
    <property type="match status" value="1"/>
</dbReference>
<dbReference type="Pfam" id="PF02145">
    <property type="entry name" value="Rap_GAP"/>
    <property type="match status" value="1"/>
</dbReference>
<dbReference type="SMART" id="SM00036">
    <property type="entry name" value="CNH"/>
    <property type="match status" value="1"/>
</dbReference>
<dbReference type="SUPFAM" id="SSF111347">
    <property type="entry name" value="Rap/Ran-GAP"/>
    <property type="match status" value="1"/>
</dbReference>
<dbReference type="PROSITE" id="PS50219">
    <property type="entry name" value="CNH"/>
    <property type="match status" value="1"/>
</dbReference>
<dbReference type="PROSITE" id="PS50085">
    <property type="entry name" value="RAPGAP"/>
    <property type="match status" value="1"/>
</dbReference>
<reference key="1">
    <citation type="journal article" date="2013" name="Nature">
        <title>The zebrafish reference genome sequence and its relationship to the human genome.</title>
        <authorList>
            <person name="Howe K."/>
            <person name="Clark M.D."/>
            <person name="Torroja C.F."/>
            <person name="Torrance J."/>
            <person name="Berthelot C."/>
            <person name="Muffato M."/>
            <person name="Collins J.E."/>
            <person name="Humphray S."/>
            <person name="McLaren K."/>
            <person name="Matthews L."/>
            <person name="McLaren S."/>
            <person name="Sealy I."/>
            <person name="Caccamo M."/>
            <person name="Churcher C."/>
            <person name="Scott C."/>
            <person name="Barrett J.C."/>
            <person name="Koch R."/>
            <person name="Rauch G.J."/>
            <person name="White S."/>
            <person name="Chow W."/>
            <person name="Kilian B."/>
            <person name="Quintais L.T."/>
            <person name="Guerra-Assuncao J.A."/>
            <person name="Zhou Y."/>
            <person name="Gu Y."/>
            <person name="Yen J."/>
            <person name="Vogel J.H."/>
            <person name="Eyre T."/>
            <person name="Redmond S."/>
            <person name="Banerjee R."/>
            <person name="Chi J."/>
            <person name="Fu B."/>
            <person name="Langley E."/>
            <person name="Maguire S.F."/>
            <person name="Laird G.K."/>
            <person name="Lloyd D."/>
            <person name="Kenyon E."/>
            <person name="Donaldson S."/>
            <person name="Sehra H."/>
            <person name="Almeida-King J."/>
            <person name="Loveland J."/>
            <person name="Trevanion S."/>
            <person name="Jones M."/>
            <person name="Quail M."/>
            <person name="Willey D."/>
            <person name="Hunt A."/>
            <person name="Burton J."/>
            <person name="Sims S."/>
            <person name="McLay K."/>
            <person name="Plumb B."/>
            <person name="Davis J."/>
            <person name="Clee C."/>
            <person name="Oliver K."/>
            <person name="Clark R."/>
            <person name="Riddle C."/>
            <person name="Elliot D."/>
            <person name="Threadgold G."/>
            <person name="Harden G."/>
            <person name="Ware D."/>
            <person name="Begum S."/>
            <person name="Mortimore B."/>
            <person name="Kerry G."/>
            <person name="Heath P."/>
            <person name="Phillimore B."/>
            <person name="Tracey A."/>
            <person name="Corby N."/>
            <person name="Dunn M."/>
            <person name="Johnson C."/>
            <person name="Wood J."/>
            <person name="Clark S."/>
            <person name="Pelan S."/>
            <person name="Griffiths G."/>
            <person name="Smith M."/>
            <person name="Glithero R."/>
            <person name="Howden P."/>
            <person name="Barker N."/>
            <person name="Lloyd C."/>
            <person name="Stevens C."/>
            <person name="Harley J."/>
            <person name="Holt K."/>
            <person name="Panagiotidis G."/>
            <person name="Lovell J."/>
            <person name="Beasley H."/>
            <person name="Henderson C."/>
            <person name="Gordon D."/>
            <person name="Auger K."/>
            <person name="Wright D."/>
            <person name="Collins J."/>
            <person name="Raisen C."/>
            <person name="Dyer L."/>
            <person name="Leung K."/>
            <person name="Robertson L."/>
            <person name="Ambridge K."/>
            <person name="Leongamornlert D."/>
            <person name="McGuire S."/>
            <person name="Gilderthorp R."/>
            <person name="Griffiths C."/>
            <person name="Manthravadi D."/>
            <person name="Nichol S."/>
            <person name="Barker G."/>
            <person name="Whitehead S."/>
            <person name="Kay M."/>
            <person name="Brown J."/>
            <person name="Murnane C."/>
            <person name="Gray E."/>
            <person name="Humphries M."/>
            <person name="Sycamore N."/>
            <person name="Barker D."/>
            <person name="Saunders D."/>
            <person name="Wallis J."/>
            <person name="Babbage A."/>
            <person name="Hammond S."/>
            <person name="Mashreghi-Mohammadi M."/>
            <person name="Barr L."/>
            <person name="Martin S."/>
            <person name="Wray P."/>
            <person name="Ellington A."/>
            <person name="Matthews N."/>
            <person name="Ellwood M."/>
            <person name="Woodmansey R."/>
            <person name="Clark G."/>
            <person name="Cooper J."/>
            <person name="Tromans A."/>
            <person name="Grafham D."/>
            <person name="Skuce C."/>
            <person name="Pandian R."/>
            <person name="Andrews R."/>
            <person name="Harrison E."/>
            <person name="Kimberley A."/>
            <person name="Garnett J."/>
            <person name="Fosker N."/>
            <person name="Hall R."/>
            <person name="Garner P."/>
            <person name="Kelly D."/>
            <person name="Bird C."/>
            <person name="Palmer S."/>
            <person name="Gehring I."/>
            <person name="Berger A."/>
            <person name="Dooley C.M."/>
            <person name="Ersan-Urun Z."/>
            <person name="Eser C."/>
            <person name="Geiger H."/>
            <person name="Geisler M."/>
            <person name="Karotki L."/>
            <person name="Kirn A."/>
            <person name="Konantz J."/>
            <person name="Konantz M."/>
            <person name="Oberlander M."/>
            <person name="Rudolph-Geiger S."/>
            <person name="Teucke M."/>
            <person name="Lanz C."/>
            <person name="Raddatz G."/>
            <person name="Osoegawa K."/>
            <person name="Zhu B."/>
            <person name="Rapp A."/>
            <person name="Widaa S."/>
            <person name="Langford C."/>
            <person name="Yang F."/>
            <person name="Schuster S.C."/>
            <person name="Carter N.P."/>
            <person name="Harrow J."/>
            <person name="Ning Z."/>
            <person name="Herrero J."/>
            <person name="Searle S.M."/>
            <person name="Enright A."/>
            <person name="Geisler R."/>
            <person name="Plasterk R.H."/>
            <person name="Lee C."/>
            <person name="Westerfield M."/>
            <person name="de Jong P.J."/>
            <person name="Zon L.I."/>
            <person name="Postlethwait J.H."/>
            <person name="Nusslein-Volhard C."/>
            <person name="Hubbard T.J."/>
            <person name="Roest Crollius H."/>
            <person name="Rogers J."/>
            <person name="Stemple D.L."/>
        </authorList>
    </citation>
    <scope>NUCLEOTIDE SEQUENCE [LARGE SCALE GENOMIC DNA]</scope>
    <source>
        <strain>Tuebingen</strain>
    </source>
</reference>
<comment type="similarity">
    <text evidence="4">Belongs to the GARNL3 family.</text>
</comment>
<feature type="chain" id="PRO_0000312218" description="GTPase-activating Rap/Ran-GAP domain-like protein 3">
    <location>
        <begin position="1"/>
        <end position="1015"/>
    </location>
</feature>
<feature type="domain" description="Rap-GAP" evidence="1">
    <location>
        <begin position="200"/>
        <end position="416"/>
    </location>
</feature>
<feature type="domain" description="CNH" evidence="2">
    <location>
        <begin position="498"/>
        <end position="812"/>
    </location>
</feature>
<feature type="region of interest" description="Disordered" evidence="3">
    <location>
        <begin position="821"/>
        <end position="842"/>
    </location>
</feature>
<feature type="region of interest" description="Disordered" evidence="3">
    <location>
        <begin position="924"/>
        <end position="1004"/>
    </location>
</feature>
<feature type="compositionally biased region" description="Low complexity" evidence="3">
    <location>
        <begin position="823"/>
        <end position="835"/>
    </location>
</feature>
<feature type="compositionally biased region" description="Basic and acidic residues" evidence="3">
    <location>
        <begin position="949"/>
        <end position="959"/>
    </location>
</feature>
<evidence type="ECO:0000255" key="1">
    <source>
        <dbReference type="PROSITE-ProRule" id="PRU00165"/>
    </source>
</evidence>
<evidence type="ECO:0000255" key="2">
    <source>
        <dbReference type="PROSITE-ProRule" id="PRU00795"/>
    </source>
</evidence>
<evidence type="ECO:0000256" key="3">
    <source>
        <dbReference type="SAM" id="MobiDB-lite"/>
    </source>
</evidence>
<evidence type="ECO:0000305" key="4"/>
<proteinExistence type="inferred from homology"/>
<name>GARL3_DANRE</name>
<accession>A5PF44</accession>